<evidence type="ECO:0000255" key="1">
    <source>
        <dbReference type="HAMAP-Rule" id="MF_00808"/>
    </source>
</evidence>
<feature type="chain" id="PRO_0000217973" description="Photosystem II reaction center protein T">
    <location>
        <begin position="1"/>
        <end position="32"/>
    </location>
</feature>
<feature type="transmembrane region" description="Helical" evidence="1">
    <location>
        <begin position="3"/>
        <end position="23"/>
    </location>
</feature>
<gene>
    <name evidence="1" type="primary">psbT</name>
</gene>
<keyword id="KW-0150">Chloroplast</keyword>
<keyword id="KW-0472">Membrane</keyword>
<keyword id="KW-0602">Photosynthesis</keyword>
<keyword id="KW-0604">Photosystem II</keyword>
<keyword id="KW-0934">Plastid</keyword>
<keyword id="KW-0793">Thylakoid</keyword>
<keyword id="KW-0812">Transmembrane</keyword>
<keyword id="KW-1133">Transmembrane helix</keyword>
<organism>
    <name type="scientific">Psilotum nudum</name>
    <name type="common">Whisk fern</name>
    <name type="synonym">Lycopodium nudum</name>
    <dbReference type="NCBI Taxonomy" id="3240"/>
    <lineage>
        <taxon>Eukaryota</taxon>
        <taxon>Viridiplantae</taxon>
        <taxon>Streptophyta</taxon>
        <taxon>Embryophyta</taxon>
        <taxon>Tracheophyta</taxon>
        <taxon>Polypodiopsida</taxon>
        <taxon>Ophioglossidae</taxon>
        <taxon>Psilotales</taxon>
        <taxon>Psilotaceae</taxon>
        <taxon>Psilotum</taxon>
    </lineage>
</organism>
<reference key="1">
    <citation type="journal article" date="2004" name="Mol. Biol. Evol.">
        <title>Chloroplast phylogeny indicates that bryophytes are monophyletic.</title>
        <authorList>
            <person name="Nishiyama T."/>
            <person name="Wolf P.G."/>
            <person name="Kugita M."/>
            <person name="Sinclair R.B."/>
            <person name="Sugita M."/>
            <person name="Sugiura C."/>
            <person name="Wakasugi T."/>
            <person name="Yamada K."/>
            <person name="Yoshinaga K."/>
            <person name="Yamaguchi K."/>
            <person name="Ueda K."/>
            <person name="Hasebe M."/>
        </authorList>
    </citation>
    <scope>NUCLEOTIDE SEQUENCE [LARGE SCALE GENOMIC DNA]</scope>
    <source>
        <strain>Kingyoku</strain>
    </source>
</reference>
<name>PSBT_PSINU</name>
<accession>Q8HU50</accession>
<geneLocation type="chloroplast"/>
<sequence>MEALVYTFLLVATLGIIFFAIFFRDPPKVPNK</sequence>
<proteinExistence type="inferred from homology"/>
<protein>
    <recommendedName>
        <fullName evidence="1">Photosystem II reaction center protein T</fullName>
        <shortName evidence="1">PSII-T</shortName>
    </recommendedName>
</protein>
<comment type="function">
    <text evidence="1">Found at the monomer-monomer interface of the photosystem II (PS II) dimer, plays a role in assembly and dimerization of PSII. PSII is a light-driven water plastoquinone oxidoreductase, using light energy to abstract electrons from H(2)O, generating a proton gradient subsequently used for ATP formation.</text>
</comment>
<comment type="subunit">
    <text evidence="1">PSII is composed of 1 copy each of membrane proteins PsbA, PsbB, PsbC, PsbD, PsbE, PsbF, PsbH, PsbI, PsbJ, PsbK, PsbL, PsbM, PsbT, PsbY, PsbZ, Psb30/Ycf12, at least 3 peripheral proteins of the oxygen-evolving complex and a large number of cofactors. It forms dimeric complexes.</text>
</comment>
<comment type="subcellular location">
    <subcellularLocation>
        <location evidence="1">Plastid</location>
        <location evidence="1">Chloroplast thylakoid membrane</location>
        <topology evidence="1">Single-pass membrane protein</topology>
    </subcellularLocation>
</comment>
<comment type="similarity">
    <text evidence="1">Belongs to the PsbT family.</text>
</comment>
<dbReference type="EMBL" id="AP004638">
    <property type="protein sequence ID" value="BAB84243.2"/>
    <property type="molecule type" value="Genomic_DNA"/>
</dbReference>
<dbReference type="SMR" id="Q8HU50"/>
<dbReference type="GO" id="GO:0009535">
    <property type="term" value="C:chloroplast thylakoid membrane"/>
    <property type="evidence" value="ECO:0007669"/>
    <property type="project" value="UniProtKB-SubCell"/>
</dbReference>
<dbReference type="GO" id="GO:0009539">
    <property type="term" value="C:photosystem II reaction center"/>
    <property type="evidence" value="ECO:0007669"/>
    <property type="project" value="InterPro"/>
</dbReference>
<dbReference type="GO" id="GO:0015979">
    <property type="term" value="P:photosynthesis"/>
    <property type="evidence" value="ECO:0007669"/>
    <property type="project" value="UniProtKB-UniRule"/>
</dbReference>
<dbReference type="HAMAP" id="MF_00808">
    <property type="entry name" value="PSII_PsbT"/>
    <property type="match status" value="1"/>
</dbReference>
<dbReference type="InterPro" id="IPR001743">
    <property type="entry name" value="PSII_PsbT"/>
</dbReference>
<dbReference type="InterPro" id="IPR037268">
    <property type="entry name" value="PSII_PsbT_sf"/>
</dbReference>
<dbReference type="PANTHER" id="PTHR36411">
    <property type="match status" value="1"/>
</dbReference>
<dbReference type="PANTHER" id="PTHR36411:SF2">
    <property type="entry name" value="PHOTOSYSTEM II REACTION CENTER PROTEIN T"/>
    <property type="match status" value="1"/>
</dbReference>
<dbReference type="Pfam" id="PF01405">
    <property type="entry name" value="PsbT"/>
    <property type="match status" value="1"/>
</dbReference>
<dbReference type="SUPFAM" id="SSF161029">
    <property type="entry name" value="Photosystem II reaction center protein T, PsbT"/>
    <property type="match status" value="1"/>
</dbReference>